<keyword id="KW-0456">Lyase</keyword>
<keyword id="KW-0501">Molybdenum cofactor biosynthesis</keyword>
<keyword id="KW-1185">Reference proteome</keyword>
<organism>
    <name type="scientific">Erythrobacter litoralis (strain HTCC2594)</name>
    <dbReference type="NCBI Taxonomy" id="314225"/>
    <lineage>
        <taxon>Bacteria</taxon>
        <taxon>Pseudomonadati</taxon>
        <taxon>Pseudomonadota</taxon>
        <taxon>Alphaproteobacteria</taxon>
        <taxon>Sphingomonadales</taxon>
        <taxon>Erythrobacteraceae</taxon>
        <taxon>Erythrobacter/Porphyrobacter group</taxon>
        <taxon>Erythrobacter</taxon>
    </lineage>
</organism>
<gene>
    <name evidence="1" type="primary">moaC</name>
    <name type="ordered locus">ELI_06520</name>
</gene>
<protein>
    <recommendedName>
        <fullName evidence="1">Cyclic pyranopterin monophosphate synthase</fullName>
        <ecNumber evidence="1">4.6.1.17</ecNumber>
    </recommendedName>
    <alternativeName>
        <fullName evidence="1">Molybdenum cofactor biosynthesis protein C</fullName>
    </alternativeName>
</protein>
<feature type="chain" id="PRO_1000139269" description="Cyclic pyranopterin monophosphate synthase">
    <location>
        <begin position="1"/>
        <end position="156"/>
    </location>
</feature>
<feature type="active site" evidence="1">
    <location>
        <position position="126"/>
    </location>
</feature>
<feature type="binding site" evidence="1">
    <location>
        <begin position="75"/>
        <end position="77"/>
    </location>
    <ligand>
        <name>substrate</name>
    </ligand>
</feature>
<feature type="binding site" evidence="1">
    <location>
        <begin position="111"/>
        <end position="112"/>
    </location>
    <ligand>
        <name>substrate</name>
    </ligand>
</feature>
<sequence>MSQLTHLDDSGAAHMVDVGGKPATERLARAGGTIRMSAEALAAIKAGDAPKGDVLGTARIAGIMAAKKTGELIPLCHPLALDAVDVAFEFGEREIAVTATASLTGKTGVEMEALTAASVALLTIYDMAKALDKGMVIEGLRLLEKRGGKSGHWIAK</sequence>
<comment type="function">
    <text evidence="1">Catalyzes the conversion of (8S)-3',8-cyclo-7,8-dihydroguanosine 5'-triphosphate to cyclic pyranopterin monophosphate (cPMP).</text>
</comment>
<comment type="catalytic activity">
    <reaction evidence="1">
        <text>(8S)-3',8-cyclo-7,8-dihydroguanosine 5'-triphosphate = cyclic pyranopterin phosphate + diphosphate</text>
        <dbReference type="Rhea" id="RHEA:49580"/>
        <dbReference type="ChEBI" id="CHEBI:33019"/>
        <dbReference type="ChEBI" id="CHEBI:59648"/>
        <dbReference type="ChEBI" id="CHEBI:131766"/>
        <dbReference type="EC" id="4.6.1.17"/>
    </reaction>
</comment>
<comment type="pathway">
    <text evidence="1">Cofactor biosynthesis; molybdopterin biosynthesis.</text>
</comment>
<comment type="subunit">
    <text evidence="1">Homohexamer; trimer of dimers.</text>
</comment>
<comment type="similarity">
    <text evidence="1">Belongs to the MoaC family.</text>
</comment>
<proteinExistence type="inferred from homology"/>
<evidence type="ECO:0000255" key="1">
    <source>
        <dbReference type="HAMAP-Rule" id="MF_01224"/>
    </source>
</evidence>
<reference key="1">
    <citation type="journal article" date="2009" name="J. Bacteriol.">
        <title>Complete genome sequence of Erythrobacter litoralis HTCC2594.</title>
        <authorList>
            <person name="Oh H.M."/>
            <person name="Giovannoni S.J."/>
            <person name="Ferriera S."/>
            <person name="Johnson J."/>
            <person name="Cho J.C."/>
        </authorList>
    </citation>
    <scope>NUCLEOTIDE SEQUENCE [LARGE SCALE GENOMIC DNA]</scope>
    <source>
        <strain>HTCC2594</strain>
    </source>
</reference>
<name>MOAC_ERYLH</name>
<accession>Q2NA95</accession>
<dbReference type="EC" id="4.6.1.17" evidence="1"/>
<dbReference type="EMBL" id="CP000157">
    <property type="protein sequence ID" value="ABC63396.1"/>
    <property type="molecule type" value="Genomic_DNA"/>
</dbReference>
<dbReference type="RefSeq" id="WP_011414232.1">
    <property type="nucleotide sequence ID" value="NC_007722.1"/>
</dbReference>
<dbReference type="SMR" id="Q2NA95"/>
<dbReference type="STRING" id="314225.ELI_06520"/>
<dbReference type="KEGG" id="eli:ELI_06520"/>
<dbReference type="eggNOG" id="COG0315">
    <property type="taxonomic scope" value="Bacteria"/>
</dbReference>
<dbReference type="HOGENOM" id="CLU_074693_1_1_5"/>
<dbReference type="OrthoDB" id="9794429at2"/>
<dbReference type="UniPathway" id="UPA00344"/>
<dbReference type="Proteomes" id="UP000008808">
    <property type="component" value="Chromosome"/>
</dbReference>
<dbReference type="GO" id="GO:0061799">
    <property type="term" value="F:cyclic pyranopterin monophosphate synthase activity"/>
    <property type="evidence" value="ECO:0007669"/>
    <property type="project" value="UniProtKB-UniRule"/>
</dbReference>
<dbReference type="GO" id="GO:0006777">
    <property type="term" value="P:Mo-molybdopterin cofactor biosynthetic process"/>
    <property type="evidence" value="ECO:0007669"/>
    <property type="project" value="UniProtKB-UniRule"/>
</dbReference>
<dbReference type="CDD" id="cd01420">
    <property type="entry name" value="MoaC_PE"/>
    <property type="match status" value="1"/>
</dbReference>
<dbReference type="Gene3D" id="3.30.70.640">
    <property type="entry name" value="Molybdopterin cofactor biosynthesis C (MoaC) domain"/>
    <property type="match status" value="1"/>
</dbReference>
<dbReference type="HAMAP" id="MF_01224_B">
    <property type="entry name" value="MoaC_B"/>
    <property type="match status" value="1"/>
</dbReference>
<dbReference type="InterPro" id="IPR023045">
    <property type="entry name" value="MoaC"/>
</dbReference>
<dbReference type="InterPro" id="IPR047594">
    <property type="entry name" value="MoaC_bact/euk"/>
</dbReference>
<dbReference type="InterPro" id="IPR036522">
    <property type="entry name" value="MoaC_sf"/>
</dbReference>
<dbReference type="InterPro" id="IPR050105">
    <property type="entry name" value="MoCo_biosynth_MoaA/MoaC"/>
</dbReference>
<dbReference type="InterPro" id="IPR002820">
    <property type="entry name" value="Mopterin_CF_biosynth-C_dom"/>
</dbReference>
<dbReference type="NCBIfam" id="TIGR00581">
    <property type="entry name" value="moaC"/>
    <property type="match status" value="1"/>
</dbReference>
<dbReference type="NCBIfam" id="NF006870">
    <property type="entry name" value="PRK09364.1"/>
    <property type="match status" value="1"/>
</dbReference>
<dbReference type="PANTHER" id="PTHR22960:SF29">
    <property type="entry name" value="CYCLIC PYRANOPTERIN MONOPHOSPHATE SYNTHASE"/>
    <property type="match status" value="1"/>
</dbReference>
<dbReference type="PANTHER" id="PTHR22960">
    <property type="entry name" value="MOLYBDOPTERIN COFACTOR SYNTHESIS PROTEIN A"/>
    <property type="match status" value="1"/>
</dbReference>
<dbReference type="Pfam" id="PF01967">
    <property type="entry name" value="MoaC"/>
    <property type="match status" value="1"/>
</dbReference>
<dbReference type="SUPFAM" id="SSF55040">
    <property type="entry name" value="Molybdenum cofactor biosynthesis protein C, MoaC"/>
    <property type="match status" value="1"/>
</dbReference>